<proteinExistence type="inferred from homology"/>
<reference key="1">
    <citation type="journal article" date="2009" name="PLoS ONE">
        <title>Salmonella paratyphi C: genetic divergence from Salmonella choleraesuis and pathogenic convergence with Salmonella typhi.</title>
        <authorList>
            <person name="Liu W.-Q."/>
            <person name="Feng Y."/>
            <person name="Wang Y."/>
            <person name="Zou Q.-H."/>
            <person name="Chen F."/>
            <person name="Guo J.-T."/>
            <person name="Peng Y.-H."/>
            <person name="Jin Y."/>
            <person name="Li Y.-G."/>
            <person name="Hu S.-N."/>
            <person name="Johnston R.N."/>
            <person name="Liu G.-R."/>
            <person name="Liu S.-L."/>
        </authorList>
    </citation>
    <scope>NUCLEOTIDE SEQUENCE [LARGE SCALE GENOMIC DNA]</scope>
    <source>
        <strain>RKS4594</strain>
    </source>
</reference>
<sequence>MSETATWQPSASIPNLLKRAAIMAEIRRFFADRGVLEVETPCMSQATVTDIHLFPFETRFVGPGHSQGMNLYLMTSPEYHMKRLLAAGCGPVFQLCRSFRNEEMGRHHNPEFTMLEWYRPHYDMYRLMNEVDDLLQQVLDCQPAESLSYQQAFQRHLEIDPLSADKTQLREAAAKLDLSNIADTEEDRDTLLQLLFTMGVEPHIGKEKPTFIYHFPASQASLAQISTEDHRVAERFEVYYKGIELANGFHELTDAREQQQRFEQDNRKRAARGLPQQPIDQNLLDALAAGLPDCSGVALGVDRLVMLALGAESLADVIAFTVDRA</sequence>
<gene>
    <name evidence="1" type="primary">epmA</name>
    <name type="synonym">yjeA</name>
    <name type="ordered locus">SPC_4494</name>
</gene>
<comment type="function">
    <text evidence="1">With EpmB is involved in the beta-lysylation step of the post-translational modification of translation elongation factor P (EF-P) on 'Lys-34'. Catalyzes the ATP-dependent activation of (R)-beta-lysine produced by EpmB, forming a lysyl-adenylate, from which the beta-lysyl moiety is then transferred to the epsilon-amino group of EF-P 'Lys-34'.</text>
</comment>
<comment type="catalytic activity">
    <reaction evidence="1">
        <text>D-beta-lysine + L-lysyl-[protein] + ATP = N(6)-((3R)-3,6-diaminohexanoyl)-L-lysyl-[protein] + AMP + diphosphate + H(+)</text>
        <dbReference type="Rhea" id="RHEA:83435"/>
        <dbReference type="Rhea" id="RHEA-COMP:9752"/>
        <dbReference type="Rhea" id="RHEA-COMP:20131"/>
        <dbReference type="ChEBI" id="CHEBI:15378"/>
        <dbReference type="ChEBI" id="CHEBI:29969"/>
        <dbReference type="ChEBI" id="CHEBI:30616"/>
        <dbReference type="ChEBI" id="CHEBI:33019"/>
        <dbReference type="ChEBI" id="CHEBI:84138"/>
        <dbReference type="ChEBI" id="CHEBI:156053"/>
        <dbReference type="ChEBI" id="CHEBI:456215"/>
    </reaction>
    <physiologicalReaction direction="left-to-right" evidence="1">
        <dbReference type="Rhea" id="RHEA:83436"/>
    </physiologicalReaction>
</comment>
<comment type="subunit">
    <text evidence="1">Homodimer.</text>
</comment>
<comment type="similarity">
    <text evidence="1">Belongs to the class-II aminoacyl-tRNA synthetase family. EpmA subfamily.</text>
</comment>
<evidence type="ECO:0000255" key="1">
    <source>
        <dbReference type="HAMAP-Rule" id="MF_00174"/>
    </source>
</evidence>
<protein>
    <recommendedName>
        <fullName evidence="1">Elongation factor P--(R)-beta-lysine ligase</fullName>
        <shortName evidence="1">EF-P--(R)-beta-lysine ligase</shortName>
        <ecNumber evidence="1">6.3.2.-</ecNumber>
    </recommendedName>
    <alternativeName>
        <fullName evidence="1">EF-P post-translational modification enzyme A</fullName>
    </alternativeName>
    <alternativeName>
        <fullName evidence="1">EF-P-lysine lysyltransferase</fullName>
    </alternativeName>
</protein>
<dbReference type="EC" id="6.3.2.-" evidence="1"/>
<dbReference type="EMBL" id="CP000857">
    <property type="protein sequence ID" value="ACN48546.1"/>
    <property type="molecule type" value="Genomic_DNA"/>
</dbReference>
<dbReference type="RefSeq" id="WP_000004797.1">
    <property type="nucleotide sequence ID" value="NC_012125.1"/>
</dbReference>
<dbReference type="SMR" id="C0Q6B6"/>
<dbReference type="KEGG" id="sei:SPC_4494"/>
<dbReference type="HOGENOM" id="CLU_008255_1_1_6"/>
<dbReference type="Proteomes" id="UP000001599">
    <property type="component" value="Chromosome"/>
</dbReference>
<dbReference type="GO" id="GO:0005829">
    <property type="term" value="C:cytosol"/>
    <property type="evidence" value="ECO:0007669"/>
    <property type="project" value="TreeGrafter"/>
</dbReference>
<dbReference type="GO" id="GO:0016880">
    <property type="term" value="F:acid-ammonia (or amide) ligase activity"/>
    <property type="evidence" value="ECO:0007669"/>
    <property type="project" value="UniProtKB-UniRule"/>
</dbReference>
<dbReference type="GO" id="GO:0005524">
    <property type="term" value="F:ATP binding"/>
    <property type="evidence" value="ECO:0007669"/>
    <property type="project" value="UniProtKB-UniRule"/>
</dbReference>
<dbReference type="GO" id="GO:0004824">
    <property type="term" value="F:lysine-tRNA ligase activity"/>
    <property type="evidence" value="ECO:0007669"/>
    <property type="project" value="InterPro"/>
</dbReference>
<dbReference type="GO" id="GO:0000049">
    <property type="term" value="F:tRNA binding"/>
    <property type="evidence" value="ECO:0007669"/>
    <property type="project" value="TreeGrafter"/>
</dbReference>
<dbReference type="GO" id="GO:0006430">
    <property type="term" value="P:lysyl-tRNA aminoacylation"/>
    <property type="evidence" value="ECO:0007669"/>
    <property type="project" value="InterPro"/>
</dbReference>
<dbReference type="FunFam" id="3.30.930.10:FF:000017">
    <property type="entry name" value="Elongation factor P--(R)-beta-lysine ligase"/>
    <property type="match status" value="1"/>
</dbReference>
<dbReference type="Gene3D" id="3.30.930.10">
    <property type="entry name" value="Bira Bifunctional Protein, Domain 2"/>
    <property type="match status" value="1"/>
</dbReference>
<dbReference type="HAMAP" id="MF_00174">
    <property type="entry name" value="EF_P_modif_A"/>
    <property type="match status" value="1"/>
</dbReference>
<dbReference type="InterPro" id="IPR004364">
    <property type="entry name" value="Aa-tRNA-synt_II"/>
</dbReference>
<dbReference type="InterPro" id="IPR006195">
    <property type="entry name" value="aa-tRNA-synth_II"/>
</dbReference>
<dbReference type="InterPro" id="IPR045864">
    <property type="entry name" value="aa-tRNA-synth_II/BPL/LPL"/>
</dbReference>
<dbReference type="InterPro" id="IPR004525">
    <property type="entry name" value="EpmA"/>
</dbReference>
<dbReference type="InterPro" id="IPR018149">
    <property type="entry name" value="Lys-tRNA-synth_II_C"/>
</dbReference>
<dbReference type="NCBIfam" id="TIGR00462">
    <property type="entry name" value="genX"/>
    <property type="match status" value="1"/>
</dbReference>
<dbReference type="NCBIfam" id="NF006828">
    <property type="entry name" value="PRK09350.1"/>
    <property type="match status" value="1"/>
</dbReference>
<dbReference type="PANTHER" id="PTHR42918:SF6">
    <property type="entry name" value="ELONGATION FACTOR P--(R)-BETA-LYSINE LIGASE"/>
    <property type="match status" value="1"/>
</dbReference>
<dbReference type="PANTHER" id="PTHR42918">
    <property type="entry name" value="LYSYL-TRNA SYNTHETASE"/>
    <property type="match status" value="1"/>
</dbReference>
<dbReference type="Pfam" id="PF00152">
    <property type="entry name" value="tRNA-synt_2"/>
    <property type="match status" value="1"/>
</dbReference>
<dbReference type="PRINTS" id="PR00982">
    <property type="entry name" value="TRNASYNTHLYS"/>
</dbReference>
<dbReference type="SUPFAM" id="SSF55681">
    <property type="entry name" value="Class II aaRS and biotin synthetases"/>
    <property type="match status" value="1"/>
</dbReference>
<dbReference type="PROSITE" id="PS50862">
    <property type="entry name" value="AA_TRNA_LIGASE_II"/>
    <property type="match status" value="1"/>
</dbReference>
<keyword id="KW-0067">ATP-binding</keyword>
<keyword id="KW-0436">Ligase</keyword>
<keyword id="KW-0547">Nucleotide-binding</keyword>
<organism>
    <name type="scientific">Salmonella paratyphi C (strain RKS4594)</name>
    <dbReference type="NCBI Taxonomy" id="476213"/>
    <lineage>
        <taxon>Bacteria</taxon>
        <taxon>Pseudomonadati</taxon>
        <taxon>Pseudomonadota</taxon>
        <taxon>Gammaproteobacteria</taxon>
        <taxon>Enterobacterales</taxon>
        <taxon>Enterobacteriaceae</taxon>
        <taxon>Salmonella</taxon>
    </lineage>
</organism>
<accession>C0Q6B6</accession>
<feature type="chain" id="PRO_1000199263" description="Elongation factor P--(R)-beta-lysine ligase">
    <location>
        <begin position="1"/>
        <end position="325"/>
    </location>
</feature>
<feature type="binding site" evidence="1">
    <location>
        <begin position="76"/>
        <end position="78"/>
    </location>
    <ligand>
        <name>substrate</name>
    </ligand>
</feature>
<feature type="binding site" evidence="1">
    <location>
        <begin position="100"/>
        <end position="102"/>
    </location>
    <ligand>
        <name>ATP</name>
        <dbReference type="ChEBI" id="CHEBI:30616"/>
    </ligand>
</feature>
<feature type="binding site" evidence="1">
    <location>
        <position position="109"/>
    </location>
    <ligand>
        <name>ATP</name>
        <dbReference type="ChEBI" id="CHEBI:30616"/>
    </ligand>
</feature>
<feature type="binding site" evidence="1">
    <location>
        <position position="118"/>
    </location>
    <ligand>
        <name>substrate</name>
    </ligand>
</feature>
<feature type="binding site" evidence="1">
    <location>
        <begin position="244"/>
        <end position="245"/>
    </location>
    <ligand>
        <name>ATP</name>
        <dbReference type="ChEBI" id="CHEBI:30616"/>
    </ligand>
</feature>
<feature type="binding site" evidence="1">
    <location>
        <position position="251"/>
    </location>
    <ligand>
        <name>substrate</name>
    </ligand>
</feature>
<feature type="binding site" evidence="1">
    <location>
        <position position="300"/>
    </location>
    <ligand>
        <name>ATP</name>
        <dbReference type="ChEBI" id="CHEBI:30616"/>
    </ligand>
</feature>
<name>EPMA_SALPC</name>